<protein>
    <recommendedName>
        <fullName evidence="1">SMC5-SMC6 complex localization factor protein 2</fullName>
    </recommendedName>
</protein>
<gene>
    <name evidence="1" type="primary">Slf2</name>
    <name type="synonym">Fam178a</name>
</gene>
<keyword id="KW-0227">DNA damage</keyword>
<keyword id="KW-0234">DNA repair</keyword>
<keyword id="KW-0539">Nucleus</keyword>
<keyword id="KW-0597">Phosphoprotein</keyword>
<keyword id="KW-1185">Reference proteome</keyword>
<accession>Q6P9P0</accession>
<accession>Q8C041</accession>
<accession>Q8C0J5</accession>
<proteinExistence type="evidence at transcript level"/>
<name>SLF2_MOUSE</name>
<reference key="1">
    <citation type="journal article" date="2005" name="Science">
        <title>The transcriptional landscape of the mammalian genome.</title>
        <authorList>
            <person name="Carninci P."/>
            <person name="Kasukawa T."/>
            <person name="Katayama S."/>
            <person name="Gough J."/>
            <person name="Frith M.C."/>
            <person name="Maeda N."/>
            <person name="Oyama R."/>
            <person name="Ravasi T."/>
            <person name="Lenhard B."/>
            <person name="Wells C."/>
            <person name="Kodzius R."/>
            <person name="Shimokawa K."/>
            <person name="Bajic V.B."/>
            <person name="Brenner S.E."/>
            <person name="Batalov S."/>
            <person name="Forrest A.R."/>
            <person name="Zavolan M."/>
            <person name="Davis M.J."/>
            <person name="Wilming L.G."/>
            <person name="Aidinis V."/>
            <person name="Allen J.E."/>
            <person name="Ambesi-Impiombato A."/>
            <person name="Apweiler R."/>
            <person name="Aturaliya R.N."/>
            <person name="Bailey T.L."/>
            <person name="Bansal M."/>
            <person name="Baxter L."/>
            <person name="Beisel K.W."/>
            <person name="Bersano T."/>
            <person name="Bono H."/>
            <person name="Chalk A.M."/>
            <person name="Chiu K.P."/>
            <person name="Choudhary V."/>
            <person name="Christoffels A."/>
            <person name="Clutterbuck D.R."/>
            <person name="Crowe M.L."/>
            <person name="Dalla E."/>
            <person name="Dalrymple B.P."/>
            <person name="de Bono B."/>
            <person name="Della Gatta G."/>
            <person name="di Bernardo D."/>
            <person name="Down T."/>
            <person name="Engstrom P."/>
            <person name="Fagiolini M."/>
            <person name="Faulkner G."/>
            <person name="Fletcher C.F."/>
            <person name="Fukushima T."/>
            <person name="Furuno M."/>
            <person name="Futaki S."/>
            <person name="Gariboldi M."/>
            <person name="Georgii-Hemming P."/>
            <person name="Gingeras T.R."/>
            <person name="Gojobori T."/>
            <person name="Green R.E."/>
            <person name="Gustincich S."/>
            <person name="Harbers M."/>
            <person name="Hayashi Y."/>
            <person name="Hensch T.K."/>
            <person name="Hirokawa N."/>
            <person name="Hill D."/>
            <person name="Huminiecki L."/>
            <person name="Iacono M."/>
            <person name="Ikeo K."/>
            <person name="Iwama A."/>
            <person name="Ishikawa T."/>
            <person name="Jakt M."/>
            <person name="Kanapin A."/>
            <person name="Katoh M."/>
            <person name="Kawasawa Y."/>
            <person name="Kelso J."/>
            <person name="Kitamura H."/>
            <person name="Kitano H."/>
            <person name="Kollias G."/>
            <person name="Krishnan S.P."/>
            <person name="Kruger A."/>
            <person name="Kummerfeld S.K."/>
            <person name="Kurochkin I.V."/>
            <person name="Lareau L.F."/>
            <person name="Lazarevic D."/>
            <person name="Lipovich L."/>
            <person name="Liu J."/>
            <person name="Liuni S."/>
            <person name="McWilliam S."/>
            <person name="Madan Babu M."/>
            <person name="Madera M."/>
            <person name="Marchionni L."/>
            <person name="Matsuda H."/>
            <person name="Matsuzawa S."/>
            <person name="Miki H."/>
            <person name="Mignone F."/>
            <person name="Miyake S."/>
            <person name="Morris K."/>
            <person name="Mottagui-Tabar S."/>
            <person name="Mulder N."/>
            <person name="Nakano N."/>
            <person name="Nakauchi H."/>
            <person name="Ng P."/>
            <person name="Nilsson R."/>
            <person name="Nishiguchi S."/>
            <person name="Nishikawa S."/>
            <person name="Nori F."/>
            <person name="Ohara O."/>
            <person name="Okazaki Y."/>
            <person name="Orlando V."/>
            <person name="Pang K.C."/>
            <person name="Pavan W.J."/>
            <person name="Pavesi G."/>
            <person name="Pesole G."/>
            <person name="Petrovsky N."/>
            <person name="Piazza S."/>
            <person name="Reed J."/>
            <person name="Reid J.F."/>
            <person name="Ring B.Z."/>
            <person name="Ringwald M."/>
            <person name="Rost B."/>
            <person name="Ruan Y."/>
            <person name="Salzberg S.L."/>
            <person name="Sandelin A."/>
            <person name="Schneider C."/>
            <person name="Schoenbach C."/>
            <person name="Sekiguchi K."/>
            <person name="Semple C.A."/>
            <person name="Seno S."/>
            <person name="Sessa L."/>
            <person name="Sheng Y."/>
            <person name="Shibata Y."/>
            <person name="Shimada H."/>
            <person name="Shimada K."/>
            <person name="Silva D."/>
            <person name="Sinclair B."/>
            <person name="Sperling S."/>
            <person name="Stupka E."/>
            <person name="Sugiura K."/>
            <person name="Sultana R."/>
            <person name="Takenaka Y."/>
            <person name="Taki K."/>
            <person name="Tammoja K."/>
            <person name="Tan S.L."/>
            <person name="Tang S."/>
            <person name="Taylor M.S."/>
            <person name="Tegner J."/>
            <person name="Teichmann S.A."/>
            <person name="Ueda H.R."/>
            <person name="van Nimwegen E."/>
            <person name="Verardo R."/>
            <person name="Wei C.L."/>
            <person name="Yagi K."/>
            <person name="Yamanishi H."/>
            <person name="Zabarovsky E."/>
            <person name="Zhu S."/>
            <person name="Zimmer A."/>
            <person name="Hide W."/>
            <person name="Bult C."/>
            <person name="Grimmond S.M."/>
            <person name="Teasdale R.D."/>
            <person name="Liu E.T."/>
            <person name="Brusic V."/>
            <person name="Quackenbush J."/>
            <person name="Wahlestedt C."/>
            <person name="Mattick J.S."/>
            <person name="Hume D.A."/>
            <person name="Kai C."/>
            <person name="Sasaki D."/>
            <person name="Tomaru Y."/>
            <person name="Fukuda S."/>
            <person name="Kanamori-Katayama M."/>
            <person name="Suzuki M."/>
            <person name="Aoki J."/>
            <person name="Arakawa T."/>
            <person name="Iida J."/>
            <person name="Imamura K."/>
            <person name="Itoh M."/>
            <person name="Kato T."/>
            <person name="Kawaji H."/>
            <person name="Kawagashira N."/>
            <person name="Kawashima T."/>
            <person name="Kojima M."/>
            <person name="Kondo S."/>
            <person name="Konno H."/>
            <person name="Nakano K."/>
            <person name="Ninomiya N."/>
            <person name="Nishio T."/>
            <person name="Okada M."/>
            <person name="Plessy C."/>
            <person name="Shibata K."/>
            <person name="Shiraki T."/>
            <person name="Suzuki S."/>
            <person name="Tagami M."/>
            <person name="Waki K."/>
            <person name="Watahiki A."/>
            <person name="Okamura-Oho Y."/>
            <person name="Suzuki H."/>
            <person name="Kawai J."/>
            <person name="Hayashizaki Y."/>
        </authorList>
    </citation>
    <scope>NUCLEOTIDE SEQUENCE [LARGE SCALE MRNA] OF 614-1273</scope>
    <source>
        <strain>C57BL/6J</strain>
        <tissue>Olfactory bulb</tissue>
        <tissue>Thymus</tissue>
    </source>
</reference>
<reference key="2">
    <citation type="journal article" date="2004" name="Genome Res.">
        <title>The status, quality, and expansion of the NIH full-length cDNA project: the Mammalian Gene Collection (MGC).</title>
        <authorList>
            <consortium name="The MGC Project Team"/>
        </authorList>
    </citation>
    <scope>NUCLEOTIDE SEQUENCE [LARGE SCALE MRNA] OF 761-1273</scope>
    <source>
        <strain>C57BL/6J</strain>
        <tissue>Brain</tissue>
    </source>
</reference>
<reference key="3">
    <citation type="unpublished observations" date="2005-07">
        <authorList>
            <person name="Blatter M.-C."/>
        </authorList>
    </citation>
    <scope>CONCEPTUAL TRANSLATION</scope>
</reference>
<evidence type="ECO:0000250" key="1">
    <source>
        <dbReference type="UniProtKB" id="Q8IX21"/>
    </source>
</evidence>
<evidence type="ECO:0000256" key="2">
    <source>
        <dbReference type="SAM" id="MobiDB-lite"/>
    </source>
</evidence>
<evidence type="ECO:0000305" key="3"/>
<organism>
    <name type="scientific">Mus musculus</name>
    <name type="common">Mouse</name>
    <dbReference type="NCBI Taxonomy" id="10090"/>
    <lineage>
        <taxon>Eukaryota</taxon>
        <taxon>Metazoa</taxon>
        <taxon>Chordata</taxon>
        <taxon>Craniata</taxon>
        <taxon>Vertebrata</taxon>
        <taxon>Euteleostomi</taxon>
        <taxon>Mammalia</taxon>
        <taxon>Eutheria</taxon>
        <taxon>Euarchontoglires</taxon>
        <taxon>Glires</taxon>
        <taxon>Rodentia</taxon>
        <taxon>Myomorpha</taxon>
        <taxon>Muroidea</taxon>
        <taxon>Muridae</taxon>
        <taxon>Murinae</taxon>
        <taxon>Mus</taxon>
        <taxon>Mus</taxon>
    </lineage>
</organism>
<dbReference type="EMBL" id="AK030951">
    <property type="protein sequence ID" value="BAC27192.1"/>
    <property type="status" value="ALT_INIT"/>
    <property type="molecule type" value="mRNA"/>
</dbReference>
<dbReference type="EMBL" id="AK032405">
    <property type="protein sequence ID" value="BAC27854.1"/>
    <property type="molecule type" value="mRNA"/>
</dbReference>
<dbReference type="EMBL" id="BC060679">
    <property type="protein sequence ID" value="AAH60679.1"/>
    <property type="molecule type" value="mRNA"/>
</dbReference>
<dbReference type="EMBL" id="AK031688">
    <property type="status" value="NOT_ANNOTATED_CDS"/>
    <property type="molecule type" value="Transcribed_RNA"/>
</dbReference>
<dbReference type="RefSeq" id="XP_017173653.1">
    <property type="nucleotide sequence ID" value="XM_017318164.1"/>
</dbReference>
<dbReference type="SMR" id="Q6P9P0"/>
<dbReference type="BioGRID" id="230481">
    <property type="interactions" value="1"/>
</dbReference>
<dbReference type="FunCoup" id="Q6P9P0">
    <property type="interactions" value="2540"/>
</dbReference>
<dbReference type="STRING" id="10090.ENSMUSP00000093758"/>
<dbReference type="iPTMnet" id="Q6P9P0"/>
<dbReference type="PhosphoSitePlus" id="Q6P9P0"/>
<dbReference type="jPOST" id="Q6P9P0"/>
<dbReference type="PaxDb" id="10090-ENSMUSP00000093758"/>
<dbReference type="ProteomicsDB" id="261078"/>
<dbReference type="AGR" id="MGI:1924968"/>
<dbReference type="MGI" id="MGI:1924968">
    <property type="gene designation" value="Slf2"/>
</dbReference>
<dbReference type="eggNOG" id="ENOG502QW1I">
    <property type="taxonomic scope" value="Eukaryota"/>
</dbReference>
<dbReference type="InParanoid" id="Q6P9P0"/>
<dbReference type="BioGRID-ORCS" id="226151">
    <property type="hits" value="4 hits in 114 CRISPR screens"/>
</dbReference>
<dbReference type="ChiTaRS" id="Fam178a">
    <property type="organism name" value="mouse"/>
</dbReference>
<dbReference type="PRO" id="PR:Q6P9P0"/>
<dbReference type="Proteomes" id="UP000000589">
    <property type="component" value="Unplaced"/>
</dbReference>
<dbReference type="RNAct" id="Q6P9P0">
    <property type="molecule type" value="protein"/>
</dbReference>
<dbReference type="GO" id="GO:0000785">
    <property type="term" value="C:chromatin"/>
    <property type="evidence" value="ECO:0000250"/>
    <property type="project" value="UniProtKB"/>
</dbReference>
<dbReference type="GO" id="GO:0005634">
    <property type="term" value="C:nucleus"/>
    <property type="evidence" value="ECO:0000250"/>
    <property type="project" value="UniProtKB"/>
</dbReference>
<dbReference type="GO" id="GO:0016605">
    <property type="term" value="C:PML body"/>
    <property type="evidence" value="ECO:0007669"/>
    <property type="project" value="UniProtKB-SubCell"/>
</dbReference>
<dbReference type="GO" id="GO:0035861">
    <property type="term" value="C:site of double-strand break"/>
    <property type="evidence" value="ECO:0000250"/>
    <property type="project" value="UniProtKB"/>
</dbReference>
<dbReference type="GO" id="GO:0006974">
    <property type="term" value="P:DNA damage response"/>
    <property type="evidence" value="ECO:0000250"/>
    <property type="project" value="UniProtKB"/>
</dbReference>
<dbReference type="GO" id="GO:0006281">
    <property type="term" value="P:DNA repair"/>
    <property type="evidence" value="ECO:0007669"/>
    <property type="project" value="UniProtKB-KW"/>
</dbReference>
<dbReference type="GO" id="GO:2000781">
    <property type="term" value="P:positive regulation of double-strand break repair"/>
    <property type="evidence" value="ECO:0000250"/>
    <property type="project" value="UniProtKB"/>
</dbReference>
<dbReference type="GO" id="GO:0034184">
    <property type="term" value="P:positive regulation of maintenance of mitotic sister chromatid cohesion"/>
    <property type="evidence" value="ECO:0000250"/>
    <property type="project" value="UniProtKB"/>
</dbReference>
<dbReference type="GO" id="GO:0031334">
    <property type="term" value="P:positive regulation of protein-containing complex assembly"/>
    <property type="evidence" value="ECO:0000250"/>
    <property type="project" value="UniProtKB"/>
</dbReference>
<dbReference type="GO" id="GO:1990166">
    <property type="term" value="P:protein localization to site of double-strand break"/>
    <property type="evidence" value="ECO:0000250"/>
    <property type="project" value="UniProtKB"/>
</dbReference>
<dbReference type="InterPro" id="IPR044276">
    <property type="entry name" value="CANIN_dom"/>
</dbReference>
<dbReference type="InterPro" id="IPR026161">
    <property type="entry name" value="FAM178"/>
</dbReference>
<dbReference type="PANTHER" id="PTHR16046">
    <property type="entry name" value="SMC5-SMC6 COMPLEX LOCALIZATION FACTOR 2"/>
    <property type="match status" value="1"/>
</dbReference>
<dbReference type="PANTHER" id="PTHR16046:SF10">
    <property type="entry name" value="SMC5-SMC6 COMPLEX LOCALIZATION FACTOR PROTEIN 2"/>
    <property type="match status" value="1"/>
</dbReference>
<dbReference type="Pfam" id="PF14816">
    <property type="entry name" value="CANIN"/>
    <property type="match status" value="1"/>
</dbReference>
<feature type="chain" id="PRO_0000089779" description="SMC5-SMC6 complex localization factor protein 2">
    <location>
        <begin position="1"/>
        <end position="1278"/>
    </location>
</feature>
<feature type="region of interest" description="Disordered" evidence="2">
    <location>
        <begin position="1"/>
        <end position="235"/>
    </location>
</feature>
<feature type="region of interest" description="Disordered" evidence="2">
    <location>
        <begin position="248"/>
        <end position="337"/>
    </location>
</feature>
<feature type="region of interest" description="Disordered" evidence="2">
    <location>
        <begin position="443"/>
        <end position="491"/>
    </location>
</feature>
<feature type="region of interest" description="Disordered" evidence="2">
    <location>
        <begin position="509"/>
        <end position="582"/>
    </location>
</feature>
<feature type="region of interest" description="Disordered" evidence="2">
    <location>
        <begin position="598"/>
        <end position="724"/>
    </location>
</feature>
<feature type="region of interest" description="Disordered" evidence="2">
    <location>
        <begin position="739"/>
        <end position="764"/>
    </location>
</feature>
<feature type="region of interest" description="Interaction with SIMC1" evidence="1">
    <location>
        <begin position="740"/>
        <end position="1278"/>
    </location>
</feature>
<feature type="region of interest" description="NSE6-like domain" evidence="1">
    <location>
        <begin position="769"/>
        <end position="1271"/>
    </location>
</feature>
<feature type="region of interest" description="Disordered" evidence="2">
    <location>
        <begin position="798"/>
        <end position="820"/>
    </location>
</feature>
<feature type="region of interest" description="Required for interaction with SLF1 and RAD18" evidence="1">
    <location>
        <begin position="807"/>
        <end position="1278"/>
    </location>
</feature>
<feature type="compositionally biased region" description="Basic and acidic residues" evidence="2">
    <location>
        <begin position="39"/>
        <end position="50"/>
    </location>
</feature>
<feature type="compositionally biased region" description="Basic residues" evidence="2">
    <location>
        <begin position="94"/>
        <end position="103"/>
    </location>
</feature>
<feature type="compositionally biased region" description="Basic and acidic residues" evidence="2">
    <location>
        <begin position="118"/>
        <end position="133"/>
    </location>
</feature>
<feature type="compositionally biased region" description="Basic and acidic residues" evidence="2">
    <location>
        <begin position="156"/>
        <end position="174"/>
    </location>
</feature>
<feature type="compositionally biased region" description="Basic and acidic residues" evidence="2">
    <location>
        <begin position="180"/>
        <end position="199"/>
    </location>
</feature>
<feature type="compositionally biased region" description="Basic and acidic residues" evidence="2">
    <location>
        <begin position="248"/>
        <end position="258"/>
    </location>
</feature>
<feature type="compositionally biased region" description="Polar residues" evidence="2">
    <location>
        <begin position="259"/>
        <end position="277"/>
    </location>
</feature>
<feature type="compositionally biased region" description="Polar residues" evidence="2">
    <location>
        <begin position="318"/>
        <end position="329"/>
    </location>
</feature>
<feature type="compositionally biased region" description="Basic and acidic residues" evidence="2">
    <location>
        <begin position="449"/>
        <end position="463"/>
    </location>
</feature>
<feature type="compositionally biased region" description="Basic and acidic residues" evidence="2">
    <location>
        <begin position="469"/>
        <end position="489"/>
    </location>
</feature>
<feature type="compositionally biased region" description="Polar residues" evidence="2">
    <location>
        <begin position="519"/>
        <end position="540"/>
    </location>
</feature>
<feature type="compositionally biased region" description="Basic and acidic residues" evidence="2">
    <location>
        <begin position="609"/>
        <end position="630"/>
    </location>
</feature>
<feature type="compositionally biased region" description="Low complexity" evidence="2">
    <location>
        <begin position="643"/>
        <end position="654"/>
    </location>
</feature>
<feature type="compositionally biased region" description="Low complexity" evidence="2">
    <location>
        <begin position="666"/>
        <end position="675"/>
    </location>
</feature>
<feature type="compositionally biased region" description="Low complexity" evidence="2">
    <location>
        <begin position="688"/>
        <end position="697"/>
    </location>
</feature>
<feature type="compositionally biased region" description="Acidic residues" evidence="2">
    <location>
        <begin position="707"/>
        <end position="724"/>
    </location>
</feature>
<feature type="modified residue" description="Phosphoserine" evidence="1">
    <location>
        <position position="591"/>
    </location>
</feature>
<feature type="modified residue" description="Phosphoserine" evidence="1">
    <location>
        <position position="708"/>
    </location>
</feature>
<feature type="modified residue" description="Phosphoserine" evidence="1">
    <location>
        <position position="712"/>
    </location>
</feature>
<feature type="modified residue" description="Phosphoserine" evidence="1">
    <location>
        <position position="719"/>
    </location>
</feature>
<feature type="sequence conflict" description="In Ref. 1; BAC27192." evidence="3" ref="1">
    <original>MK</original>
    <variation>YM</variation>
    <location>
        <begin position="761"/>
        <end position="762"/>
    </location>
</feature>
<feature type="sequence conflict" description="In Ref. 1; BAC27854." evidence="3" ref="1">
    <original>D</original>
    <variation>H</variation>
    <location>
        <position position="788"/>
    </location>
</feature>
<feature type="sequence conflict" description="In Ref. 1; BAC27854." evidence="3" ref="1">
    <original>F</original>
    <variation>I</variation>
    <location>
        <position position="945"/>
    </location>
</feature>
<feature type="sequence conflict" description="In Ref. 1; BAC27192." evidence="3" ref="1">
    <original>S</original>
    <variation>G</variation>
    <location>
        <position position="1096"/>
    </location>
</feature>
<feature type="sequence conflict" description="In Ref. 1; BAC27854." evidence="3" ref="1">
    <original>P</original>
    <variation>T</variation>
    <location>
        <position position="1139"/>
    </location>
</feature>
<comment type="function">
    <text evidence="1">Plays a role in the DNA damage response (DDR) pathway by regulating postreplication repair of UV-damaged DNA and genomic stability maintenance. The SLF1-SLF2 complex acts to link RAD18 with the SMC5-SMC6 complex at replication-coupled interstrand cross-links (ICL) and DNA double-strand breaks (DSBs) sites on chromatin during DNA repair in response to stalled replication forks. Promotes the recruitment of the SMC5-SMC6 complex to DNA lesions. May play a role in SMC5-SMC6 complex recruitment for viral restriction. Forms a complex with SIMC1 and this complex is required to recruit SMC5-SMC6 complex to PML nuclear bodies and sites of viral replication.</text>
</comment>
<comment type="subunit">
    <text evidence="1">Forms a heterodimer with SIMC1. Interacts with SLF1 (via N-terminus); this interaction links RAD18 to the SMC5-SMC6 complex. Interacts with RAD18; this interaction is increased in a SLF1-dependent manner. Interacts with SMC5 and SMC6.</text>
</comment>
<comment type="subcellular location">
    <subcellularLocation>
        <location evidence="1">Nucleus</location>
    </subcellularLocation>
    <subcellularLocation>
        <location evidence="1">Nucleus</location>
        <location evidence="1">PML body</location>
    </subcellularLocation>
    <text evidence="1">Mainly localizes in the nucleus. Colocalizes with PCNA on replication sites. Associates with chromatin. Accumulates with RAD18 and the SMC5-SMC6 complex at replication-coupled DNA interstrand repair and DNA double-strand breaks (DSBs) sites on chromatin in a ubiquitin-dependent manner.</text>
</comment>
<comment type="similarity">
    <text evidence="3">Belongs to the FAM178 family.</text>
</comment>
<comment type="sequence caution" evidence="3">
    <conflict type="erroneous initiation">
        <sequence resource="EMBL-CDS" id="BAC27192"/>
    </conflict>
</comment>
<sequence length="1278" mass="143970">MTRRCMPARPGFPSSPAPGSSPPRCHLRPGSTAPAAAGKRTESPGDRKQSIIDFFKPAAKQDKHMLDSPQKSNIKYRGNGLSITGTEQFERKLSSPKKLKPKRMSSEESPILEAFMKGGKEHHKDRGVHESRRPCMSLSKYLPKGAGIYAPSSYRLPKEIKAQKKKHQSPERRKSLFIHESNREKNDRDRGKNSEDSRKQATATEGDIFKHSSRSISSRSSLSRHHPGESTLGARFQLSLASYWREREQKKLRKEQMEQRINSENSFSEASNLSLKSSGVGKNCKPRHEHSKHTEAVPGKSNLSTLENGHLSRKRSSSDSWELSGSKQNKFSDKRTEELCGLRPEKHKRTYHTKSKRVLSREAPRHIPSERKVYQTHCTEDSWWCSALGRHSQGAGKTVSRGMSIASTLRLYLGRVISQLWKMDISQEKDHLQTRGNFQALNRINSPTKEQRNSVDSDLKSTKEPIIPKARESFLEKRPDTSHQREKFIRHIALKTPGGVLRLEDIAKEPEDETDRSSADSAPSNAGHHSSRNSDQVHSASTKETKIQKPHLPLPQEKSTIKRASNLQKNKPAGSVTSKETKLPLLSHVPSAVSSRVPLNAKNCTLPVPKKDKERSSSKERSGHSTESSKHKEHRAKTIKAVSNESSGKNSGGSLHSEYAPPTASPPAALEVVPSVPSPAAPSDKESSGNSNAGSNALKRKFRGDFDSDEESLGYTLESDEEEETLKSLEEIMALNFSRTPTTSGKPPAVSKGLRSQSSDMKEYAQSGTYTNTLERLVKEMEDTQRLDELQKKLQEDIRQGRGIKSPLRTGDQDSTDDGDGLLEEHREFLKKFSVTVDAIPDHHPGEEIFNFLNSGKIFNQYTLDLRDSGFIGESAVEKLILKSGKTDQIFLTTQGFLTTAYHYVQCPVPVLKWLFRMMSVHTDCIVSVQILSTLMEITIRNDTFSDSPVWPWIPSLSDIAAVFFNMGVGFGSLFPLETLQPDFNEENLISETQKTLGGKESEDSPYSPVFSALPETNILNVVKFLGLCTSIHPEGYQDGELMLLILMLFKMSLEKELKQIPLVDFQSLLINLMKNIRDWNTKVHELCLGINELSSHPHNLLWLVQLVPNWTSRGRQLRQCLSLVMMSKLLDEKHEDIPNANNLQISVLHRYLVQMKPSDLLKKMVLKKRAEQPNETIDDSLHLELEKQAYYLTYILLHLVGEVSCSHSLSSGQRKHFVLLCGALEKHVKCDIREDARLFYRTKVKDLVARIHGKWQEIIQNCRPTQGQLHDFWVPDS</sequence>